<gene>
    <name evidence="1" type="primary">tatB</name>
    <name type="ordered locus">NE0638</name>
</gene>
<dbReference type="EMBL" id="AL954747">
    <property type="protein sequence ID" value="CAD84549.1"/>
    <property type="molecule type" value="Genomic_DNA"/>
</dbReference>
<dbReference type="RefSeq" id="WP_011111261.1">
    <property type="nucleotide sequence ID" value="NC_004757.1"/>
</dbReference>
<dbReference type="SMR" id="Q82WN0"/>
<dbReference type="STRING" id="228410.NE0638"/>
<dbReference type="DNASU" id="1081577"/>
<dbReference type="GeneID" id="87103835"/>
<dbReference type="KEGG" id="neu:NE0638"/>
<dbReference type="eggNOG" id="COG1826">
    <property type="taxonomic scope" value="Bacteria"/>
</dbReference>
<dbReference type="HOGENOM" id="CLU_086034_1_1_4"/>
<dbReference type="OrthoDB" id="9816005at2"/>
<dbReference type="PhylomeDB" id="Q82WN0"/>
<dbReference type="Proteomes" id="UP000001416">
    <property type="component" value="Chromosome"/>
</dbReference>
<dbReference type="GO" id="GO:0033281">
    <property type="term" value="C:TAT protein transport complex"/>
    <property type="evidence" value="ECO:0007669"/>
    <property type="project" value="UniProtKB-UniRule"/>
</dbReference>
<dbReference type="GO" id="GO:0008320">
    <property type="term" value="F:protein transmembrane transporter activity"/>
    <property type="evidence" value="ECO:0007669"/>
    <property type="project" value="UniProtKB-UniRule"/>
</dbReference>
<dbReference type="GO" id="GO:0043953">
    <property type="term" value="P:protein transport by the Tat complex"/>
    <property type="evidence" value="ECO:0007669"/>
    <property type="project" value="UniProtKB-UniRule"/>
</dbReference>
<dbReference type="Gene3D" id="1.20.5.3310">
    <property type="match status" value="1"/>
</dbReference>
<dbReference type="HAMAP" id="MF_00237">
    <property type="entry name" value="TatB"/>
    <property type="match status" value="1"/>
</dbReference>
<dbReference type="InterPro" id="IPR003369">
    <property type="entry name" value="TatA/B/E"/>
</dbReference>
<dbReference type="InterPro" id="IPR018448">
    <property type="entry name" value="TatB"/>
</dbReference>
<dbReference type="NCBIfam" id="TIGR01410">
    <property type="entry name" value="tatB"/>
    <property type="match status" value="1"/>
</dbReference>
<dbReference type="PANTHER" id="PTHR33162">
    <property type="entry name" value="SEC-INDEPENDENT PROTEIN TRANSLOCASE PROTEIN TATA, CHLOROPLASTIC"/>
    <property type="match status" value="1"/>
</dbReference>
<dbReference type="PANTHER" id="PTHR33162:SF1">
    <property type="entry name" value="SEC-INDEPENDENT PROTEIN TRANSLOCASE PROTEIN TATA, CHLOROPLASTIC"/>
    <property type="match status" value="1"/>
</dbReference>
<dbReference type="Pfam" id="PF02416">
    <property type="entry name" value="TatA_B_E"/>
    <property type="match status" value="1"/>
</dbReference>
<dbReference type="PRINTS" id="PR01506">
    <property type="entry name" value="TATBPROTEIN"/>
</dbReference>
<proteinExistence type="inferred from homology"/>
<sequence>MFDISFAELVVVGIVALIVIGPERLPAVARTAGYFLGRARRYVDQVKHDLHEEMELDSLRKLRDSMHETVNSFENSVRSEINKIQETTETQSAVIPDKQPPFEKAAENIEPVNTSETKTSSAPAEPRQPNS</sequence>
<evidence type="ECO:0000255" key="1">
    <source>
        <dbReference type="HAMAP-Rule" id="MF_00237"/>
    </source>
</evidence>
<evidence type="ECO:0000256" key="2">
    <source>
        <dbReference type="SAM" id="MobiDB-lite"/>
    </source>
</evidence>
<protein>
    <recommendedName>
        <fullName evidence="1">Sec-independent protein translocase protein TatB</fullName>
    </recommendedName>
</protein>
<comment type="function">
    <text evidence="1">Part of the twin-arginine translocation (Tat) system that transports large folded proteins containing a characteristic twin-arginine motif in their signal peptide across membranes. Together with TatC, TatB is part of a receptor directly interacting with Tat signal peptides. TatB may form an oligomeric binding site that transiently accommodates folded Tat precursor proteins before their translocation.</text>
</comment>
<comment type="subunit">
    <text evidence="1">The Tat system comprises two distinct complexes: a TatABC complex, containing multiple copies of TatA, TatB and TatC subunits, and a separate TatA complex, containing only TatA subunits. Substrates initially bind to the TatABC complex, which probably triggers association of the separate TatA complex to form the active translocon.</text>
</comment>
<comment type="subcellular location">
    <subcellularLocation>
        <location evidence="1">Cell inner membrane</location>
        <topology evidence="1">Single-pass membrane protein</topology>
    </subcellularLocation>
</comment>
<comment type="similarity">
    <text evidence="1">Belongs to the TatB family.</text>
</comment>
<name>TATB_NITEU</name>
<organism>
    <name type="scientific">Nitrosomonas europaea (strain ATCC 19718 / CIP 103999 / KCTC 2705 / NBRC 14298)</name>
    <dbReference type="NCBI Taxonomy" id="228410"/>
    <lineage>
        <taxon>Bacteria</taxon>
        <taxon>Pseudomonadati</taxon>
        <taxon>Pseudomonadota</taxon>
        <taxon>Betaproteobacteria</taxon>
        <taxon>Nitrosomonadales</taxon>
        <taxon>Nitrosomonadaceae</taxon>
        <taxon>Nitrosomonas</taxon>
    </lineage>
</organism>
<feature type="chain" id="PRO_0000301199" description="Sec-independent protein translocase protein TatB">
    <location>
        <begin position="1"/>
        <end position="131"/>
    </location>
</feature>
<feature type="transmembrane region" description="Helical" evidence="1">
    <location>
        <begin position="1"/>
        <end position="21"/>
    </location>
</feature>
<feature type="region of interest" description="Disordered" evidence="2">
    <location>
        <begin position="71"/>
        <end position="131"/>
    </location>
</feature>
<feature type="compositionally biased region" description="Polar residues" evidence="2">
    <location>
        <begin position="71"/>
        <end position="93"/>
    </location>
</feature>
<feature type="compositionally biased region" description="Polar residues" evidence="2">
    <location>
        <begin position="111"/>
        <end position="131"/>
    </location>
</feature>
<accession>Q82WN0</accession>
<keyword id="KW-0997">Cell inner membrane</keyword>
<keyword id="KW-1003">Cell membrane</keyword>
<keyword id="KW-0472">Membrane</keyword>
<keyword id="KW-0653">Protein transport</keyword>
<keyword id="KW-1185">Reference proteome</keyword>
<keyword id="KW-0811">Translocation</keyword>
<keyword id="KW-0812">Transmembrane</keyword>
<keyword id="KW-1133">Transmembrane helix</keyword>
<keyword id="KW-0813">Transport</keyword>
<reference key="1">
    <citation type="journal article" date="2003" name="J. Bacteriol.">
        <title>Complete genome sequence of the ammonia-oxidizing bacterium and obligate chemolithoautotroph Nitrosomonas europaea.</title>
        <authorList>
            <person name="Chain P."/>
            <person name="Lamerdin J.E."/>
            <person name="Larimer F.W."/>
            <person name="Regala W."/>
            <person name="Lao V."/>
            <person name="Land M.L."/>
            <person name="Hauser L."/>
            <person name="Hooper A.B."/>
            <person name="Klotz M.G."/>
            <person name="Norton J."/>
            <person name="Sayavedra-Soto L.A."/>
            <person name="Arciero D.M."/>
            <person name="Hommes N.G."/>
            <person name="Whittaker M.M."/>
            <person name="Arp D.J."/>
        </authorList>
    </citation>
    <scope>NUCLEOTIDE SEQUENCE [LARGE SCALE GENOMIC DNA]</scope>
    <source>
        <strain>ATCC 19718 / CIP 103999 / KCTC 2705 / NBRC 14298</strain>
    </source>
</reference>